<name>NUOD_PARDP</name>
<feature type="chain" id="PRO_0000357882" description="NADH-quinone oxidoreductase subunit D">
    <location>
        <begin position="1"/>
        <end position="412"/>
    </location>
</feature>
<feature type="helix" evidence="6">
    <location>
        <begin position="17"/>
        <end position="20"/>
    </location>
</feature>
<feature type="strand" evidence="6">
    <location>
        <begin position="27"/>
        <end position="31"/>
    </location>
</feature>
<feature type="strand" evidence="6">
    <location>
        <begin position="33"/>
        <end position="35"/>
    </location>
</feature>
<feature type="turn" evidence="6">
    <location>
        <begin position="36"/>
        <end position="41"/>
    </location>
</feature>
<feature type="strand" evidence="6">
    <location>
        <begin position="43"/>
        <end position="49"/>
    </location>
</feature>
<feature type="strand" evidence="6">
    <location>
        <begin position="52"/>
        <end position="59"/>
    </location>
</feature>
<feature type="helix" evidence="6">
    <location>
        <begin position="67"/>
        <end position="70"/>
    </location>
</feature>
<feature type="helix" evidence="6">
    <location>
        <begin position="71"/>
        <end position="73"/>
    </location>
</feature>
<feature type="helix" evidence="6">
    <location>
        <begin position="76"/>
        <end position="84"/>
    </location>
</feature>
<feature type="helix" evidence="6">
    <location>
        <begin position="91"/>
        <end position="106"/>
    </location>
</feature>
<feature type="helix" evidence="6">
    <location>
        <begin position="112"/>
        <end position="140"/>
    </location>
</feature>
<feature type="helix" evidence="6">
    <location>
        <begin position="145"/>
        <end position="165"/>
    </location>
</feature>
<feature type="strand" evidence="6">
    <location>
        <begin position="178"/>
        <end position="181"/>
    </location>
</feature>
<feature type="helix" evidence="6">
    <location>
        <begin position="185"/>
        <end position="209"/>
    </location>
</feature>
<feature type="helix" evidence="6">
    <location>
        <begin position="213"/>
        <end position="219"/>
    </location>
</feature>
<feature type="helix" evidence="6">
    <location>
        <begin position="227"/>
        <end position="232"/>
    </location>
</feature>
<feature type="helix" evidence="6">
    <location>
        <begin position="238"/>
        <end position="241"/>
    </location>
</feature>
<feature type="turn" evidence="6">
    <location>
        <begin position="242"/>
        <end position="244"/>
    </location>
</feature>
<feature type="helix" evidence="6">
    <location>
        <begin position="249"/>
        <end position="252"/>
    </location>
</feature>
<feature type="helix" evidence="6">
    <location>
        <begin position="258"/>
        <end position="260"/>
    </location>
</feature>
<feature type="strand" evidence="6">
    <location>
        <begin position="265"/>
        <end position="270"/>
    </location>
</feature>
<feature type="helix" evidence="6">
    <location>
        <begin position="273"/>
        <end position="300"/>
    </location>
</feature>
<feature type="turn" evidence="6">
    <location>
        <begin position="310"/>
        <end position="312"/>
    </location>
</feature>
<feature type="helix" evidence="6">
    <location>
        <begin position="317"/>
        <end position="320"/>
    </location>
</feature>
<feature type="helix" evidence="6">
    <location>
        <begin position="324"/>
        <end position="335"/>
    </location>
</feature>
<feature type="strand" evidence="6">
    <location>
        <begin position="342"/>
        <end position="351"/>
    </location>
</feature>
<feature type="strand" evidence="6">
    <location>
        <begin position="354"/>
        <end position="362"/>
    </location>
</feature>
<feature type="strand" evidence="6">
    <location>
        <begin position="364"/>
        <end position="367"/>
    </location>
</feature>
<feature type="strand" evidence="6">
    <location>
        <begin position="369"/>
        <end position="374"/>
    </location>
</feature>
<feature type="helix" evidence="6">
    <location>
        <begin position="376"/>
        <end position="382"/>
    </location>
</feature>
<feature type="helix" evidence="6">
    <location>
        <begin position="384"/>
        <end position="388"/>
    </location>
</feature>
<feature type="helix" evidence="6">
    <location>
        <begin position="395"/>
        <end position="403"/>
    </location>
</feature>
<feature type="helix" evidence="6">
    <location>
        <begin position="407"/>
        <end position="411"/>
    </location>
</feature>
<reference key="1">
    <citation type="submission" date="2006-12" db="EMBL/GenBank/DDBJ databases">
        <title>Complete sequence of chromosome 1 of Paracoccus denitrificans PD1222.</title>
        <authorList>
            <person name="Copeland A."/>
            <person name="Lucas S."/>
            <person name="Lapidus A."/>
            <person name="Barry K."/>
            <person name="Detter J.C."/>
            <person name="Glavina del Rio T."/>
            <person name="Hammon N."/>
            <person name="Israni S."/>
            <person name="Dalin E."/>
            <person name="Tice H."/>
            <person name="Pitluck S."/>
            <person name="Munk A.C."/>
            <person name="Brettin T."/>
            <person name="Bruce D."/>
            <person name="Han C."/>
            <person name="Tapia R."/>
            <person name="Gilna P."/>
            <person name="Schmutz J."/>
            <person name="Larimer F."/>
            <person name="Land M."/>
            <person name="Hauser L."/>
            <person name="Kyrpides N."/>
            <person name="Lykidis A."/>
            <person name="Spiro S."/>
            <person name="Richardson D.J."/>
            <person name="Moir J.W.B."/>
            <person name="Ferguson S.J."/>
            <person name="van Spanning R.J.M."/>
            <person name="Richardson P."/>
        </authorList>
    </citation>
    <scope>NUCLEOTIDE SEQUENCE [LARGE SCALE GENOMIC DNA]</scope>
    <source>
        <strain>Pd 1222</strain>
    </source>
</reference>
<reference key="2">
    <citation type="journal article" date="2004" name="J. Biol. Chem.">
        <title>Assembly of respiratory complexes I, III, and IV into NADH oxidase supercomplex stabilizes complex I in Paracoccus denitrificans.</title>
        <authorList>
            <person name="Stroh A."/>
            <person name="Anderka O."/>
            <person name="Pfeiffer K."/>
            <person name="Yagi T."/>
            <person name="Finel M."/>
            <person name="Ludwig B."/>
            <person name="Schagger H."/>
        </authorList>
    </citation>
    <scope>IDENTIFICATION IN NADH OXIDASE SUPERCOMPLEX</scope>
    <scope>FUNCTION</scope>
    <scope>SUBUNIT</scope>
    <scope>SUBCELLULAR LOCATION</scope>
</reference>
<gene>
    <name type="primary">nuoD</name>
    <name evidence="3" type="synonym">nqo4</name>
    <name type="ordered locus">Pden_2247</name>
</gene>
<protein>
    <recommendedName>
        <fullName>NADH-quinone oxidoreductase subunit D</fullName>
        <ecNumber>7.1.1.-</ecNumber>
    </recommendedName>
    <alternativeName>
        <fullName>NADH dehydrogenase I, subunit 4</fullName>
    </alternativeName>
    <alternativeName>
        <fullName>NADH dehydrogenase I, subunit D</fullName>
    </alternativeName>
    <alternativeName>
        <fullName>NADH-quinone oxidoreductase subunit 4</fullName>
        <shortName>NQO4</shortName>
    </alternativeName>
    <alternativeName>
        <fullName>NDH-1, subunit 4</fullName>
    </alternativeName>
    <alternativeName>
        <fullName>NDH-1, subunit D</fullName>
    </alternativeName>
</protein>
<keyword id="KW-0002">3D-structure</keyword>
<keyword id="KW-0997">Cell inner membrane</keyword>
<keyword id="KW-1003">Cell membrane</keyword>
<keyword id="KW-0472">Membrane</keyword>
<keyword id="KW-0520">NAD</keyword>
<keyword id="KW-0874">Quinone</keyword>
<keyword id="KW-1185">Reference proteome</keyword>
<keyword id="KW-1278">Translocase</keyword>
<keyword id="KW-0813">Transport</keyword>
<keyword id="KW-0830">Ubiquinone</keyword>
<evidence type="ECO:0000250" key="1"/>
<evidence type="ECO:0000269" key="2">
    <source>
    </source>
</evidence>
<evidence type="ECO:0000303" key="3">
    <source>
    </source>
</evidence>
<evidence type="ECO:0000305" key="4"/>
<evidence type="ECO:0000305" key="5">
    <source>
    </source>
</evidence>
<evidence type="ECO:0007829" key="6">
    <source>
        <dbReference type="PDB" id="8QBY"/>
    </source>
</evidence>
<comment type="function">
    <text evidence="5">NDH-1 shuttles electrons from NADH, via FMN and iron-sulfur (Fe-S) centers, to quinones in the respiratory chain. The immediate electron acceptor for the enzyme in this species is believed to be ubiquinone. Couples the redox reaction to proton translocation (for every two electrons transferred, four hydrogen ions are translocated across the cytoplasmic membrane), and thus conserves the redox energy in a proton gradient.</text>
</comment>
<comment type="catalytic activity">
    <reaction>
        <text>a quinone + NADH + 5 H(+)(in) = a quinol + NAD(+) + 4 H(+)(out)</text>
        <dbReference type="Rhea" id="RHEA:57888"/>
        <dbReference type="ChEBI" id="CHEBI:15378"/>
        <dbReference type="ChEBI" id="CHEBI:24646"/>
        <dbReference type="ChEBI" id="CHEBI:57540"/>
        <dbReference type="ChEBI" id="CHEBI:57945"/>
        <dbReference type="ChEBI" id="CHEBI:132124"/>
    </reaction>
</comment>
<comment type="subunit">
    <text evidence="1 2">NDH-1 is composed of at least 14 different subunits, Nqo1 to Nqo14. The complex has a L-shaped structure, with the hydrophobic arm (subunits Nqo7, Nqo8, Nqo10 to Nqo14) embedded in the inner membrane and the hydrophilic peripheral arm (subunits Nqo1 to Nqo6, Nqo9) protruding into the bacterial cytoplasm. The hydrophilic domain contains all the redox centers (By similarity). NADH-quinone oxidoreductase forms a supercomplex with ubiquinol-cytochrome c reductase complex (complex III or cytochrome b-c1 complex) and cytochrome c oxidase (complex IV), which stabilizes the NADH-quinone oxidoreductase complex (PubMed:14610094).</text>
</comment>
<comment type="subcellular location">
    <subcellularLocation>
        <location evidence="5">Cell inner membrane</location>
        <topology evidence="5">Peripheral membrane protein</topology>
    </subcellularLocation>
</comment>
<comment type="similarity">
    <text evidence="4">Belongs to the complex I 49 kDa subunit family.</text>
</comment>
<proteinExistence type="evidence at protein level"/>
<organism>
    <name type="scientific">Paracoccus denitrificans (strain Pd 1222)</name>
    <dbReference type="NCBI Taxonomy" id="318586"/>
    <lineage>
        <taxon>Bacteria</taxon>
        <taxon>Pseudomonadati</taxon>
        <taxon>Pseudomonadota</taxon>
        <taxon>Alphaproteobacteria</taxon>
        <taxon>Rhodobacterales</taxon>
        <taxon>Paracoccaceae</taxon>
        <taxon>Paracoccus</taxon>
    </lineage>
</organism>
<accession>A1B495</accession>
<sequence>MDGDIRKNSYDDGSMDALTGEQSIRNFNINFGPQHPAAHGVLRMVLELDGEIVERADPHIGLLHRGTEKLMESRTYLQNLPYLDRLDYVAPMNQEHAWCLAIERLTGTVIPRRASLIRVLYSEIGRILNHLMGVTTGAMDVGALTPPLWGFEAREELMIFYERACGARLHAAYFRPGGVHQDLPPDLLDDIEEWCERFPKLVDDLDTLLTENRIFKQRLVDIGIVTEADALDWGYTGVMVRGSGLAWDLRRSQPYECYDEFDFQIPVGRNGDCYDRYLCRMAEMRESCKIMQQAVQKLRAEPAGDVLARGKLTPPRRAEMKRDMESLIHHFKLYTEGFKVPAGEVYAAVEAPKGEFGVYLVADGTNKPWRAKLRAPGFAHLQSIDWMSRGHMLADVPAIIATLDIVFGEVDR</sequence>
<dbReference type="EC" id="7.1.1.-"/>
<dbReference type="EMBL" id="CP000489">
    <property type="protein sequence ID" value="ABL70339.1"/>
    <property type="molecule type" value="Genomic_DNA"/>
</dbReference>
<dbReference type="RefSeq" id="WP_011748533.1">
    <property type="nucleotide sequence ID" value="NC_008686.1"/>
</dbReference>
<dbReference type="PDB" id="8QBY">
    <property type="method" value="EM"/>
    <property type="resolution" value="2.30 A"/>
    <property type="chains" value="D=1-412"/>
</dbReference>
<dbReference type="PDBsum" id="8QBY"/>
<dbReference type="EMDB" id="EMD-18324"/>
<dbReference type="SMR" id="A1B495"/>
<dbReference type="STRING" id="318586.Pden_2247"/>
<dbReference type="EnsemblBacteria" id="ABL70339">
    <property type="protein sequence ID" value="ABL70339"/>
    <property type="gene ID" value="Pden_2247"/>
</dbReference>
<dbReference type="GeneID" id="93450646"/>
<dbReference type="KEGG" id="pde:Pden_2247"/>
<dbReference type="eggNOG" id="COG0649">
    <property type="taxonomic scope" value="Bacteria"/>
</dbReference>
<dbReference type="HOGENOM" id="CLU_015134_1_1_5"/>
<dbReference type="OrthoDB" id="9801496at2"/>
<dbReference type="Proteomes" id="UP000000361">
    <property type="component" value="Chromosome 1"/>
</dbReference>
<dbReference type="GO" id="GO:0005886">
    <property type="term" value="C:plasma membrane"/>
    <property type="evidence" value="ECO:0007669"/>
    <property type="project" value="UniProtKB-SubCell"/>
</dbReference>
<dbReference type="GO" id="GO:0051287">
    <property type="term" value="F:NAD binding"/>
    <property type="evidence" value="ECO:0007669"/>
    <property type="project" value="InterPro"/>
</dbReference>
<dbReference type="GO" id="GO:0050136">
    <property type="term" value="F:NADH:ubiquinone reductase (non-electrogenic) activity"/>
    <property type="evidence" value="ECO:0007669"/>
    <property type="project" value="UniProtKB-UniRule"/>
</dbReference>
<dbReference type="GO" id="GO:0048038">
    <property type="term" value="F:quinone binding"/>
    <property type="evidence" value="ECO:0007669"/>
    <property type="project" value="UniProtKB-KW"/>
</dbReference>
<dbReference type="FunFam" id="1.10.645.10:FF:000005">
    <property type="entry name" value="NADH-quinone oxidoreductase subunit D"/>
    <property type="match status" value="1"/>
</dbReference>
<dbReference type="Gene3D" id="1.10.645.10">
    <property type="entry name" value="Cytochrome-c3 Hydrogenase, chain B"/>
    <property type="match status" value="1"/>
</dbReference>
<dbReference type="HAMAP" id="MF_01358">
    <property type="entry name" value="NDH1_NuoD"/>
    <property type="match status" value="1"/>
</dbReference>
<dbReference type="InterPro" id="IPR001135">
    <property type="entry name" value="NADH_Q_OxRdtase_suD"/>
</dbReference>
<dbReference type="InterPro" id="IPR014029">
    <property type="entry name" value="NADH_UbQ_OxRdtase_49kDa_CS"/>
</dbReference>
<dbReference type="InterPro" id="IPR022885">
    <property type="entry name" value="NDH1_su_D/H"/>
</dbReference>
<dbReference type="InterPro" id="IPR029014">
    <property type="entry name" value="NiFe-Hase_large"/>
</dbReference>
<dbReference type="NCBIfam" id="TIGR01962">
    <property type="entry name" value="NuoD"/>
    <property type="match status" value="1"/>
</dbReference>
<dbReference type="NCBIfam" id="NF004739">
    <property type="entry name" value="PRK06075.1"/>
    <property type="match status" value="1"/>
</dbReference>
<dbReference type="PANTHER" id="PTHR11993:SF10">
    <property type="entry name" value="NADH DEHYDROGENASE [UBIQUINONE] IRON-SULFUR PROTEIN 2, MITOCHONDRIAL"/>
    <property type="match status" value="1"/>
</dbReference>
<dbReference type="PANTHER" id="PTHR11993">
    <property type="entry name" value="NADH-UBIQUINONE OXIDOREDUCTASE 49 KDA SUBUNIT"/>
    <property type="match status" value="1"/>
</dbReference>
<dbReference type="Pfam" id="PF00346">
    <property type="entry name" value="Complex1_49kDa"/>
    <property type="match status" value="1"/>
</dbReference>
<dbReference type="SUPFAM" id="SSF56762">
    <property type="entry name" value="HydB/Nqo4-like"/>
    <property type="match status" value="1"/>
</dbReference>
<dbReference type="PROSITE" id="PS00535">
    <property type="entry name" value="COMPLEX1_49K"/>
    <property type="match status" value="1"/>
</dbReference>